<accession>P0AF41</accession>
<accession>P27308</accession>
<gene>
    <name type="primary">yijD</name>
    <name type="ordered locus">c4927</name>
</gene>
<proteinExistence type="inferred from homology"/>
<organism>
    <name type="scientific">Escherichia coli O6:H1 (strain CFT073 / ATCC 700928 / UPEC)</name>
    <dbReference type="NCBI Taxonomy" id="199310"/>
    <lineage>
        <taxon>Bacteria</taxon>
        <taxon>Pseudomonadati</taxon>
        <taxon>Pseudomonadota</taxon>
        <taxon>Gammaproteobacteria</taxon>
        <taxon>Enterobacterales</taxon>
        <taxon>Enterobacteriaceae</taxon>
        <taxon>Escherichia</taxon>
    </lineage>
</organism>
<dbReference type="EMBL" id="AE014075">
    <property type="protein sequence ID" value="AAN83355.1"/>
    <property type="molecule type" value="Genomic_DNA"/>
</dbReference>
<dbReference type="RefSeq" id="WP_000806411.1">
    <property type="nucleotide sequence ID" value="NZ_CP051263.1"/>
</dbReference>
<dbReference type="STRING" id="199310.c4927"/>
<dbReference type="KEGG" id="ecc:c4927"/>
<dbReference type="eggNOG" id="ENOG5031GYK">
    <property type="taxonomic scope" value="Bacteria"/>
</dbReference>
<dbReference type="HOGENOM" id="CLU_138008_1_0_6"/>
<dbReference type="BioCyc" id="ECOL199310:C4927-MONOMER"/>
<dbReference type="Proteomes" id="UP000001410">
    <property type="component" value="Chromosome"/>
</dbReference>
<dbReference type="GO" id="GO:0005886">
    <property type="term" value="C:plasma membrane"/>
    <property type="evidence" value="ECO:0007669"/>
    <property type="project" value="UniProtKB-SubCell"/>
</dbReference>
<dbReference type="InterPro" id="IPR009867">
    <property type="entry name" value="DUF1422"/>
</dbReference>
<dbReference type="NCBIfam" id="NF008278">
    <property type="entry name" value="PRK11056.1"/>
    <property type="match status" value="1"/>
</dbReference>
<dbReference type="Pfam" id="PF07226">
    <property type="entry name" value="DUF1422"/>
    <property type="match status" value="1"/>
</dbReference>
<protein>
    <recommendedName>
        <fullName>Inner membrane protein YijD</fullName>
    </recommendedName>
</protein>
<comment type="subcellular location">
    <subcellularLocation>
        <location evidence="1">Cell inner membrane</location>
        <topology evidence="1">Multi-pass membrane protein</topology>
    </subcellularLocation>
</comment>
<evidence type="ECO:0000250" key="1"/>
<evidence type="ECO:0000255" key="2"/>
<sequence>MKQANQDRGTLLLALVAGLSINGTFAALFSSIVPFSVFPIISLVLTVYCLHQRYLNRTMPVGLPGLAAACFILGVLLYSTVVRAEYPDIGSNFFPAVLSVIMVFWIGAKMRNRKQEVAE</sequence>
<name>YIJD_ECOL6</name>
<feature type="chain" id="PRO_0000169700" description="Inner membrane protein YijD">
    <location>
        <begin position="1"/>
        <end position="119"/>
    </location>
</feature>
<feature type="topological domain" description="Cytoplasmic" evidence="2">
    <location>
        <begin position="1"/>
        <end position="8"/>
    </location>
</feature>
<feature type="transmembrane region" description="Helical" evidence="2">
    <location>
        <begin position="9"/>
        <end position="28"/>
    </location>
</feature>
<feature type="topological domain" description="Periplasmic" evidence="2">
    <location>
        <begin position="29"/>
        <end position="31"/>
    </location>
</feature>
<feature type="transmembrane region" description="Helical" evidence="2">
    <location>
        <begin position="32"/>
        <end position="50"/>
    </location>
</feature>
<feature type="topological domain" description="Cytoplasmic" evidence="2">
    <location>
        <begin position="51"/>
        <end position="61"/>
    </location>
</feature>
<feature type="transmembrane region" description="Helical" evidence="2">
    <location>
        <begin position="62"/>
        <end position="84"/>
    </location>
</feature>
<feature type="topological domain" description="Periplasmic" evidence="2">
    <location>
        <begin position="85"/>
        <end position="88"/>
    </location>
</feature>
<feature type="transmembrane region" description="Helical" evidence="2">
    <location>
        <begin position="89"/>
        <end position="108"/>
    </location>
</feature>
<feature type="topological domain" description="Cytoplasmic" evidence="2">
    <location>
        <begin position="109"/>
        <end position="119"/>
    </location>
</feature>
<reference key="1">
    <citation type="journal article" date="2002" name="Proc. Natl. Acad. Sci. U.S.A.">
        <title>Extensive mosaic structure revealed by the complete genome sequence of uropathogenic Escherichia coli.</title>
        <authorList>
            <person name="Welch R.A."/>
            <person name="Burland V."/>
            <person name="Plunkett G. III"/>
            <person name="Redford P."/>
            <person name="Roesch P."/>
            <person name="Rasko D."/>
            <person name="Buckles E.L."/>
            <person name="Liou S.-R."/>
            <person name="Boutin A."/>
            <person name="Hackett J."/>
            <person name="Stroud D."/>
            <person name="Mayhew G.F."/>
            <person name="Rose D.J."/>
            <person name="Zhou S."/>
            <person name="Schwartz D.C."/>
            <person name="Perna N.T."/>
            <person name="Mobley H.L.T."/>
            <person name="Donnenberg M.S."/>
            <person name="Blattner F.R."/>
        </authorList>
    </citation>
    <scope>NUCLEOTIDE SEQUENCE [LARGE SCALE GENOMIC DNA]</scope>
    <source>
        <strain>CFT073 / ATCC 700928 / UPEC</strain>
    </source>
</reference>
<keyword id="KW-0997">Cell inner membrane</keyword>
<keyword id="KW-1003">Cell membrane</keyword>
<keyword id="KW-0472">Membrane</keyword>
<keyword id="KW-1185">Reference proteome</keyword>
<keyword id="KW-0812">Transmembrane</keyword>
<keyword id="KW-1133">Transmembrane helix</keyword>